<name>NUOK_BACC1</name>
<reference key="1">
    <citation type="journal article" date="2004" name="Nucleic Acids Res.">
        <title>The genome sequence of Bacillus cereus ATCC 10987 reveals metabolic adaptations and a large plasmid related to Bacillus anthracis pXO1.</title>
        <authorList>
            <person name="Rasko D.A."/>
            <person name="Ravel J."/>
            <person name="Oekstad O.A."/>
            <person name="Helgason E."/>
            <person name="Cer R.Z."/>
            <person name="Jiang L."/>
            <person name="Shores K.A."/>
            <person name="Fouts D.E."/>
            <person name="Tourasse N.J."/>
            <person name="Angiuoli S.V."/>
            <person name="Kolonay J.F."/>
            <person name="Nelson W.C."/>
            <person name="Kolstoe A.-B."/>
            <person name="Fraser C.M."/>
            <person name="Read T.D."/>
        </authorList>
    </citation>
    <scope>NUCLEOTIDE SEQUENCE [LARGE SCALE GENOMIC DNA]</scope>
    <source>
        <strain>ATCC 10987 / NRS 248</strain>
    </source>
</reference>
<protein>
    <recommendedName>
        <fullName evidence="1">NADH-quinone oxidoreductase subunit K</fullName>
        <ecNumber evidence="1">7.1.1.-</ecNumber>
    </recommendedName>
    <alternativeName>
        <fullName evidence="1">NADH dehydrogenase I subunit K</fullName>
    </alternativeName>
    <alternativeName>
        <fullName evidence="1">NDH-1 subunit K</fullName>
    </alternativeName>
</protein>
<comment type="function">
    <text evidence="1">NDH-1 shuttles electrons from NADH, via FMN and iron-sulfur (Fe-S) centers, to quinones in the respiratory chain. The immediate electron acceptor for the enzyme in this species is believed to be a menaquinone. Couples the redox reaction to proton translocation (for every two electrons transferred, four hydrogen ions are translocated across the cytoplasmic membrane), and thus conserves the redox energy in a proton gradient.</text>
</comment>
<comment type="catalytic activity">
    <reaction evidence="1">
        <text>a quinone + NADH + 5 H(+)(in) = a quinol + NAD(+) + 4 H(+)(out)</text>
        <dbReference type="Rhea" id="RHEA:57888"/>
        <dbReference type="ChEBI" id="CHEBI:15378"/>
        <dbReference type="ChEBI" id="CHEBI:24646"/>
        <dbReference type="ChEBI" id="CHEBI:57540"/>
        <dbReference type="ChEBI" id="CHEBI:57945"/>
        <dbReference type="ChEBI" id="CHEBI:132124"/>
    </reaction>
</comment>
<comment type="subunit">
    <text evidence="1">NDH-1 is composed of 14 different subunits. Subunits NuoA, H, J, K, L, M, N constitute the membrane sector of the complex.</text>
</comment>
<comment type="subcellular location">
    <subcellularLocation>
        <location evidence="1">Cell membrane</location>
        <topology evidence="1">Multi-pass membrane protein</topology>
    </subcellularLocation>
</comment>
<comment type="similarity">
    <text evidence="1">Belongs to the complex I subunit 4L family.</text>
</comment>
<gene>
    <name evidence="1" type="primary">nuoK</name>
    <name type="ordered locus">BCE_5418</name>
</gene>
<organism>
    <name type="scientific">Bacillus cereus (strain ATCC 10987 / NRS 248)</name>
    <dbReference type="NCBI Taxonomy" id="222523"/>
    <lineage>
        <taxon>Bacteria</taxon>
        <taxon>Bacillati</taxon>
        <taxon>Bacillota</taxon>
        <taxon>Bacilli</taxon>
        <taxon>Bacillales</taxon>
        <taxon>Bacillaceae</taxon>
        <taxon>Bacillus</taxon>
        <taxon>Bacillus cereus group</taxon>
    </lineage>
</organism>
<feature type="chain" id="PRO_0000389943" description="NADH-quinone oxidoreductase subunit K">
    <location>
        <begin position="1"/>
        <end position="104"/>
    </location>
</feature>
<feature type="transmembrane region" description="Helical" evidence="1">
    <location>
        <begin position="4"/>
        <end position="24"/>
    </location>
</feature>
<feature type="transmembrane region" description="Helical" evidence="1">
    <location>
        <begin position="31"/>
        <end position="51"/>
    </location>
</feature>
<feature type="transmembrane region" description="Helical" evidence="1">
    <location>
        <begin position="67"/>
        <end position="87"/>
    </location>
</feature>
<sequence length="104" mass="11060">MSSVPASAYLTLAIILFCIGLFGALTKRNTVIVLVCIELMLNAANLNLVAFSKLGLFPNLTGQIFSLFTMAVAAAEAAVGLAILIALYRNRTTVHVDEMDTLKG</sequence>
<keyword id="KW-1003">Cell membrane</keyword>
<keyword id="KW-0472">Membrane</keyword>
<keyword id="KW-0520">NAD</keyword>
<keyword id="KW-0874">Quinone</keyword>
<keyword id="KW-1278">Translocase</keyword>
<keyword id="KW-0812">Transmembrane</keyword>
<keyword id="KW-1133">Transmembrane helix</keyword>
<keyword id="KW-0813">Transport</keyword>
<dbReference type="EC" id="7.1.1.-" evidence="1"/>
<dbReference type="EMBL" id="AE017194">
    <property type="protein sequence ID" value="AAS44318.1"/>
    <property type="molecule type" value="Genomic_DNA"/>
</dbReference>
<dbReference type="SMR" id="Q72XG0"/>
<dbReference type="KEGG" id="bca:BCE_5418"/>
<dbReference type="HOGENOM" id="CLU_144724_0_0_9"/>
<dbReference type="Proteomes" id="UP000002527">
    <property type="component" value="Chromosome"/>
</dbReference>
<dbReference type="GO" id="GO:0030964">
    <property type="term" value="C:NADH dehydrogenase complex"/>
    <property type="evidence" value="ECO:0007669"/>
    <property type="project" value="TreeGrafter"/>
</dbReference>
<dbReference type="GO" id="GO:0005886">
    <property type="term" value="C:plasma membrane"/>
    <property type="evidence" value="ECO:0007669"/>
    <property type="project" value="UniProtKB-SubCell"/>
</dbReference>
<dbReference type="GO" id="GO:0050136">
    <property type="term" value="F:NADH:ubiquinone reductase (non-electrogenic) activity"/>
    <property type="evidence" value="ECO:0007669"/>
    <property type="project" value="UniProtKB-UniRule"/>
</dbReference>
<dbReference type="GO" id="GO:0048038">
    <property type="term" value="F:quinone binding"/>
    <property type="evidence" value="ECO:0007669"/>
    <property type="project" value="UniProtKB-KW"/>
</dbReference>
<dbReference type="GO" id="GO:0042773">
    <property type="term" value="P:ATP synthesis coupled electron transport"/>
    <property type="evidence" value="ECO:0007669"/>
    <property type="project" value="InterPro"/>
</dbReference>
<dbReference type="FunFam" id="1.10.287.3510:FF:000001">
    <property type="entry name" value="NADH-quinone oxidoreductase subunit K"/>
    <property type="match status" value="1"/>
</dbReference>
<dbReference type="Gene3D" id="1.10.287.3510">
    <property type="match status" value="1"/>
</dbReference>
<dbReference type="HAMAP" id="MF_01456">
    <property type="entry name" value="NDH1_NuoK"/>
    <property type="match status" value="1"/>
</dbReference>
<dbReference type="InterPro" id="IPR001133">
    <property type="entry name" value="NADH_UbQ_OxRdtase_chain4L/K"/>
</dbReference>
<dbReference type="InterPro" id="IPR039428">
    <property type="entry name" value="NUOK/Mnh_C1-like"/>
</dbReference>
<dbReference type="NCBIfam" id="NF004320">
    <property type="entry name" value="PRK05715.1-2"/>
    <property type="match status" value="1"/>
</dbReference>
<dbReference type="NCBIfam" id="NF004321">
    <property type="entry name" value="PRK05715.1-3"/>
    <property type="match status" value="1"/>
</dbReference>
<dbReference type="NCBIfam" id="NF004322">
    <property type="entry name" value="PRK05715.1-4"/>
    <property type="match status" value="1"/>
</dbReference>
<dbReference type="NCBIfam" id="NF004323">
    <property type="entry name" value="PRK05715.1-5"/>
    <property type="match status" value="1"/>
</dbReference>
<dbReference type="PANTHER" id="PTHR11434:SF16">
    <property type="entry name" value="NADH-UBIQUINONE OXIDOREDUCTASE CHAIN 4L"/>
    <property type="match status" value="1"/>
</dbReference>
<dbReference type="PANTHER" id="PTHR11434">
    <property type="entry name" value="NADH-UBIQUINONE OXIDOREDUCTASE SUBUNIT ND4L"/>
    <property type="match status" value="1"/>
</dbReference>
<dbReference type="Pfam" id="PF00420">
    <property type="entry name" value="Oxidored_q2"/>
    <property type="match status" value="1"/>
</dbReference>
<proteinExistence type="inferred from homology"/>
<evidence type="ECO:0000255" key="1">
    <source>
        <dbReference type="HAMAP-Rule" id="MF_01456"/>
    </source>
</evidence>
<accession>Q72XG0</accession>